<name>PURA_GLOVI</name>
<dbReference type="EC" id="6.3.4.4" evidence="1"/>
<dbReference type="EMBL" id="BA000045">
    <property type="protein sequence ID" value="BAC91221.1"/>
    <property type="molecule type" value="Genomic_DNA"/>
</dbReference>
<dbReference type="RefSeq" id="NP_926226.1">
    <property type="nucleotide sequence ID" value="NC_005125.1"/>
</dbReference>
<dbReference type="RefSeq" id="WP_011143270.1">
    <property type="nucleotide sequence ID" value="NC_005125.1"/>
</dbReference>
<dbReference type="SMR" id="Q7NG93"/>
<dbReference type="FunCoup" id="Q7NG93">
    <property type="interactions" value="416"/>
</dbReference>
<dbReference type="STRING" id="251221.gene:10760790"/>
<dbReference type="EnsemblBacteria" id="BAC91221">
    <property type="protein sequence ID" value="BAC91221"/>
    <property type="gene ID" value="BAC91221"/>
</dbReference>
<dbReference type="KEGG" id="gvi:glr3280"/>
<dbReference type="PATRIC" id="fig|251221.4.peg.3312"/>
<dbReference type="eggNOG" id="COG0104">
    <property type="taxonomic scope" value="Bacteria"/>
</dbReference>
<dbReference type="HOGENOM" id="CLU_029848_0_0_3"/>
<dbReference type="InParanoid" id="Q7NG93"/>
<dbReference type="OrthoDB" id="9807553at2"/>
<dbReference type="PhylomeDB" id="Q7NG93"/>
<dbReference type="UniPathway" id="UPA00075">
    <property type="reaction ID" value="UER00335"/>
</dbReference>
<dbReference type="Proteomes" id="UP000000557">
    <property type="component" value="Chromosome"/>
</dbReference>
<dbReference type="GO" id="GO:0005737">
    <property type="term" value="C:cytoplasm"/>
    <property type="evidence" value="ECO:0000318"/>
    <property type="project" value="GO_Central"/>
</dbReference>
<dbReference type="GO" id="GO:0004019">
    <property type="term" value="F:adenylosuccinate synthase activity"/>
    <property type="evidence" value="ECO:0000318"/>
    <property type="project" value="GO_Central"/>
</dbReference>
<dbReference type="GO" id="GO:0005525">
    <property type="term" value="F:GTP binding"/>
    <property type="evidence" value="ECO:0007669"/>
    <property type="project" value="UniProtKB-UniRule"/>
</dbReference>
<dbReference type="GO" id="GO:0000287">
    <property type="term" value="F:magnesium ion binding"/>
    <property type="evidence" value="ECO:0007669"/>
    <property type="project" value="UniProtKB-UniRule"/>
</dbReference>
<dbReference type="GO" id="GO:0044208">
    <property type="term" value="P:'de novo' AMP biosynthetic process"/>
    <property type="evidence" value="ECO:0000318"/>
    <property type="project" value="GO_Central"/>
</dbReference>
<dbReference type="GO" id="GO:0046040">
    <property type="term" value="P:IMP metabolic process"/>
    <property type="evidence" value="ECO:0000318"/>
    <property type="project" value="GO_Central"/>
</dbReference>
<dbReference type="CDD" id="cd03108">
    <property type="entry name" value="AdSS"/>
    <property type="match status" value="1"/>
</dbReference>
<dbReference type="FunFam" id="1.10.300.10:FF:000001">
    <property type="entry name" value="Adenylosuccinate synthetase"/>
    <property type="match status" value="1"/>
</dbReference>
<dbReference type="FunFam" id="3.90.170.10:FF:000001">
    <property type="entry name" value="Adenylosuccinate synthetase"/>
    <property type="match status" value="1"/>
</dbReference>
<dbReference type="Gene3D" id="3.40.440.10">
    <property type="entry name" value="Adenylosuccinate Synthetase, subunit A, domain 1"/>
    <property type="match status" value="1"/>
</dbReference>
<dbReference type="Gene3D" id="1.10.300.10">
    <property type="entry name" value="Adenylosuccinate Synthetase, subunit A, domain 2"/>
    <property type="match status" value="1"/>
</dbReference>
<dbReference type="Gene3D" id="3.90.170.10">
    <property type="entry name" value="Adenylosuccinate Synthetase, subunit A, domain 3"/>
    <property type="match status" value="1"/>
</dbReference>
<dbReference type="HAMAP" id="MF_00011">
    <property type="entry name" value="Adenylosucc_synth"/>
    <property type="match status" value="1"/>
</dbReference>
<dbReference type="InterPro" id="IPR018220">
    <property type="entry name" value="Adenylosuccin_syn_GTP-bd"/>
</dbReference>
<dbReference type="InterPro" id="IPR033128">
    <property type="entry name" value="Adenylosuccin_syn_Lys_AS"/>
</dbReference>
<dbReference type="InterPro" id="IPR042109">
    <property type="entry name" value="Adenylosuccinate_synth_dom1"/>
</dbReference>
<dbReference type="InterPro" id="IPR042110">
    <property type="entry name" value="Adenylosuccinate_synth_dom2"/>
</dbReference>
<dbReference type="InterPro" id="IPR042111">
    <property type="entry name" value="Adenylosuccinate_synth_dom3"/>
</dbReference>
<dbReference type="InterPro" id="IPR001114">
    <property type="entry name" value="Adenylosuccinate_synthetase"/>
</dbReference>
<dbReference type="InterPro" id="IPR027417">
    <property type="entry name" value="P-loop_NTPase"/>
</dbReference>
<dbReference type="NCBIfam" id="NF002223">
    <property type="entry name" value="PRK01117.1"/>
    <property type="match status" value="1"/>
</dbReference>
<dbReference type="NCBIfam" id="TIGR00184">
    <property type="entry name" value="purA"/>
    <property type="match status" value="1"/>
</dbReference>
<dbReference type="PANTHER" id="PTHR11846">
    <property type="entry name" value="ADENYLOSUCCINATE SYNTHETASE"/>
    <property type="match status" value="1"/>
</dbReference>
<dbReference type="PANTHER" id="PTHR11846:SF0">
    <property type="entry name" value="ADENYLOSUCCINATE SYNTHETASE"/>
    <property type="match status" value="1"/>
</dbReference>
<dbReference type="Pfam" id="PF00709">
    <property type="entry name" value="Adenylsucc_synt"/>
    <property type="match status" value="1"/>
</dbReference>
<dbReference type="SMART" id="SM00788">
    <property type="entry name" value="Adenylsucc_synt"/>
    <property type="match status" value="1"/>
</dbReference>
<dbReference type="SUPFAM" id="SSF52540">
    <property type="entry name" value="P-loop containing nucleoside triphosphate hydrolases"/>
    <property type="match status" value="1"/>
</dbReference>
<dbReference type="PROSITE" id="PS01266">
    <property type="entry name" value="ADENYLOSUCCIN_SYN_1"/>
    <property type="match status" value="1"/>
</dbReference>
<dbReference type="PROSITE" id="PS00513">
    <property type="entry name" value="ADENYLOSUCCIN_SYN_2"/>
    <property type="match status" value="1"/>
</dbReference>
<gene>
    <name evidence="1" type="primary">purA</name>
    <name type="ordered locus">glr3280</name>
</gene>
<proteinExistence type="inferred from homology"/>
<organism>
    <name type="scientific">Gloeobacter violaceus (strain ATCC 29082 / PCC 7421)</name>
    <dbReference type="NCBI Taxonomy" id="251221"/>
    <lineage>
        <taxon>Bacteria</taxon>
        <taxon>Bacillati</taxon>
        <taxon>Cyanobacteriota</taxon>
        <taxon>Cyanophyceae</taxon>
        <taxon>Gloeobacterales</taxon>
        <taxon>Gloeobacteraceae</taxon>
        <taxon>Gloeobacter</taxon>
    </lineage>
</organism>
<sequence>MANVIVVGAQWGDEGKGKITDLLSVSADVVVRYQGGINAGHTVCVGEQTFKLHLIPSGILYPETCCVIASGTVVDPKVLLEEIRHLEELGISTKNLFIAETAHVTMPYHRLIDIAEEERRGKNRIGTTGRGIGPTYADKSGRTGFRVLDLMQPEGFREKLEWIVPLKNVLLERLYNLPPLAVDQVAEQYLAYAEQLRPYVIDASLLIDQAVRTHRNILFEGAQGTLLDLDHGTYPYVTSSNPVAGGACVGAGVGPTIIDRVIGVAKAYTTRVGEGPFPTELRDEVGRHLGERGAEFGTTTGRPRRCGWFDAVIGRYAVRINGLDCLAITKLDVLDELESIKVCVAYHCPSKTVEEFPSDANLFGRCEPVYETLPGWKEPTGHCRTLEELPPKARDYLEFLAHQMKTPIALVSVGANREQTIIVEDPIHGPKRGLLGHNGD</sequence>
<accession>Q7NG93</accession>
<keyword id="KW-0963">Cytoplasm</keyword>
<keyword id="KW-0342">GTP-binding</keyword>
<keyword id="KW-0436">Ligase</keyword>
<keyword id="KW-0460">Magnesium</keyword>
<keyword id="KW-0479">Metal-binding</keyword>
<keyword id="KW-0547">Nucleotide-binding</keyword>
<keyword id="KW-0658">Purine biosynthesis</keyword>
<keyword id="KW-1185">Reference proteome</keyword>
<protein>
    <recommendedName>
        <fullName evidence="1">Adenylosuccinate synthetase</fullName>
        <shortName evidence="1">AMPSase</shortName>
        <shortName evidence="1">AdSS</shortName>
        <ecNumber evidence="1">6.3.4.4</ecNumber>
    </recommendedName>
    <alternativeName>
        <fullName evidence="1">IMP--aspartate ligase</fullName>
    </alternativeName>
</protein>
<evidence type="ECO:0000255" key="1">
    <source>
        <dbReference type="HAMAP-Rule" id="MF_00011"/>
    </source>
</evidence>
<reference key="1">
    <citation type="journal article" date="2003" name="DNA Res.">
        <title>Complete genome structure of Gloeobacter violaceus PCC 7421, a cyanobacterium that lacks thylakoids.</title>
        <authorList>
            <person name="Nakamura Y."/>
            <person name="Kaneko T."/>
            <person name="Sato S."/>
            <person name="Mimuro M."/>
            <person name="Miyashita H."/>
            <person name="Tsuchiya T."/>
            <person name="Sasamoto S."/>
            <person name="Watanabe A."/>
            <person name="Kawashima K."/>
            <person name="Kishida Y."/>
            <person name="Kiyokawa C."/>
            <person name="Kohara M."/>
            <person name="Matsumoto M."/>
            <person name="Matsuno A."/>
            <person name="Nakazaki N."/>
            <person name="Shimpo S."/>
            <person name="Takeuchi C."/>
            <person name="Yamada M."/>
            <person name="Tabata S."/>
        </authorList>
    </citation>
    <scope>NUCLEOTIDE SEQUENCE [LARGE SCALE GENOMIC DNA]</scope>
    <source>
        <strain>ATCC 29082 / PCC 7421</strain>
    </source>
</reference>
<comment type="function">
    <text evidence="1">Plays an important role in the de novo pathway of purine nucleotide biosynthesis. Catalyzes the first committed step in the biosynthesis of AMP from IMP.</text>
</comment>
<comment type="catalytic activity">
    <reaction evidence="1">
        <text>IMP + L-aspartate + GTP = N(6)-(1,2-dicarboxyethyl)-AMP + GDP + phosphate + 2 H(+)</text>
        <dbReference type="Rhea" id="RHEA:15753"/>
        <dbReference type="ChEBI" id="CHEBI:15378"/>
        <dbReference type="ChEBI" id="CHEBI:29991"/>
        <dbReference type="ChEBI" id="CHEBI:37565"/>
        <dbReference type="ChEBI" id="CHEBI:43474"/>
        <dbReference type="ChEBI" id="CHEBI:57567"/>
        <dbReference type="ChEBI" id="CHEBI:58053"/>
        <dbReference type="ChEBI" id="CHEBI:58189"/>
        <dbReference type="EC" id="6.3.4.4"/>
    </reaction>
</comment>
<comment type="cofactor">
    <cofactor evidence="1">
        <name>Mg(2+)</name>
        <dbReference type="ChEBI" id="CHEBI:18420"/>
    </cofactor>
    <text evidence="1">Binds 1 Mg(2+) ion per subunit.</text>
</comment>
<comment type="pathway">
    <text evidence="1">Purine metabolism; AMP biosynthesis via de novo pathway; AMP from IMP: step 1/2.</text>
</comment>
<comment type="subunit">
    <text evidence="1">Homodimer.</text>
</comment>
<comment type="subcellular location">
    <subcellularLocation>
        <location evidence="1">Cytoplasm</location>
    </subcellularLocation>
</comment>
<comment type="similarity">
    <text evidence="1">Belongs to the adenylosuccinate synthetase family.</text>
</comment>
<feature type="chain" id="PRO_0000095181" description="Adenylosuccinate synthetase">
    <location>
        <begin position="1"/>
        <end position="440"/>
    </location>
</feature>
<feature type="active site" description="Proton acceptor" evidence="1">
    <location>
        <position position="13"/>
    </location>
</feature>
<feature type="active site" description="Proton donor" evidence="1">
    <location>
        <position position="41"/>
    </location>
</feature>
<feature type="binding site" evidence="1">
    <location>
        <begin position="12"/>
        <end position="18"/>
    </location>
    <ligand>
        <name>GTP</name>
        <dbReference type="ChEBI" id="CHEBI:37565"/>
    </ligand>
</feature>
<feature type="binding site" description="in other chain" evidence="1">
    <location>
        <begin position="13"/>
        <end position="16"/>
    </location>
    <ligand>
        <name>IMP</name>
        <dbReference type="ChEBI" id="CHEBI:58053"/>
        <note>ligand shared between dimeric partners</note>
    </ligand>
</feature>
<feature type="binding site" evidence="1">
    <location>
        <position position="13"/>
    </location>
    <ligand>
        <name>Mg(2+)</name>
        <dbReference type="ChEBI" id="CHEBI:18420"/>
    </ligand>
</feature>
<feature type="binding site" description="in other chain" evidence="1">
    <location>
        <begin position="38"/>
        <end position="41"/>
    </location>
    <ligand>
        <name>IMP</name>
        <dbReference type="ChEBI" id="CHEBI:58053"/>
        <note>ligand shared between dimeric partners</note>
    </ligand>
</feature>
<feature type="binding site" evidence="1">
    <location>
        <begin position="40"/>
        <end position="42"/>
    </location>
    <ligand>
        <name>GTP</name>
        <dbReference type="ChEBI" id="CHEBI:37565"/>
    </ligand>
</feature>
<feature type="binding site" evidence="1">
    <location>
        <position position="40"/>
    </location>
    <ligand>
        <name>Mg(2+)</name>
        <dbReference type="ChEBI" id="CHEBI:18420"/>
    </ligand>
</feature>
<feature type="binding site" description="in other chain" evidence="1">
    <location>
        <position position="128"/>
    </location>
    <ligand>
        <name>IMP</name>
        <dbReference type="ChEBI" id="CHEBI:58053"/>
        <note>ligand shared between dimeric partners</note>
    </ligand>
</feature>
<feature type="binding site" evidence="1">
    <location>
        <position position="142"/>
    </location>
    <ligand>
        <name>IMP</name>
        <dbReference type="ChEBI" id="CHEBI:58053"/>
        <note>ligand shared between dimeric partners</note>
    </ligand>
</feature>
<feature type="binding site" description="in other chain" evidence="1">
    <location>
        <position position="223"/>
    </location>
    <ligand>
        <name>IMP</name>
        <dbReference type="ChEBI" id="CHEBI:58053"/>
        <note>ligand shared between dimeric partners</note>
    </ligand>
</feature>
<feature type="binding site" description="in other chain" evidence="1">
    <location>
        <position position="238"/>
    </location>
    <ligand>
        <name>IMP</name>
        <dbReference type="ChEBI" id="CHEBI:58053"/>
        <note>ligand shared between dimeric partners</note>
    </ligand>
</feature>
<feature type="binding site" evidence="1">
    <location>
        <begin position="298"/>
        <end position="304"/>
    </location>
    <ligand>
        <name>substrate</name>
    </ligand>
</feature>
<feature type="binding site" description="in other chain" evidence="1">
    <location>
        <position position="302"/>
    </location>
    <ligand>
        <name>IMP</name>
        <dbReference type="ChEBI" id="CHEBI:58053"/>
        <note>ligand shared between dimeric partners</note>
    </ligand>
</feature>
<feature type="binding site" evidence="1">
    <location>
        <position position="304"/>
    </location>
    <ligand>
        <name>GTP</name>
        <dbReference type="ChEBI" id="CHEBI:37565"/>
    </ligand>
</feature>
<feature type="binding site" evidence="1">
    <location>
        <begin position="330"/>
        <end position="332"/>
    </location>
    <ligand>
        <name>GTP</name>
        <dbReference type="ChEBI" id="CHEBI:37565"/>
    </ligand>
</feature>
<feature type="binding site" evidence="1">
    <location>
        <begin position="412"/>
        <end position="414"/>
    </location>
    <ligand>
        <name>GTP</name>
        <dbReference type="ChEBI" id="CHEBI:37565"/>
    </ligand>
</feature>